<proteinExistence type="inferred from homology"/>
<dbReference type="EMBL" id="U93876">
    <property type="protein sequence ID" value="AAB80910.1"/>
    <property type="molecule type" value="Genomic_DNA"/>
</dbReference>
<dbReference type="EMBL" id="AL009126">
    <property type="protein sequence ID" value="CAB14603.1"/>
    <property type="molecule type" value="Genomic_DNA"/>
</dbReference>
<dbReference type="PIR" id="G69973">
    <property type="entry name" value="G69973"/>
</dbReference>
<dbReference type="RefSeq" id="NP_390539.1">
    <property type="nucleotide sequence ID" value="NC_000964.3"/>
</dbReference>
<dbReference type="RefSeq" id="WP_004398909.1">
    <property type="nucleotide sequence ID" value="NZ_OZ025638.1"/>
</dbReference>
<dbReference type="SMR" id="O07086"/>
<dbReference type="FunCoup" id="O07086">
    <property type="interactions" value="60"/>
</dbReference>
<dbReference type="STRING" id="224308.BSU26620"/>
<dbReference type="TCDB" id="2.A.7.3.38">
    <property type="family name" value="the drug/metabolite transporter (dmt) superfamily"/>
</dbReference>
<dbReference type="PaxDb" id="224308-BSU26620"/>
<dbReference type="EnsemblBacteria" id="CAB14603">
    <property type="protein sequence ID" value="CAB14603"/>
    <property type="gene ID" value="BSU_26620"/>
</dbReference>
<dbReference type="GeneID" id="937629"/>
<dbReference type="KEGG" id="bsu:BSU26620"/>
<dbReference type="PATRIC" id="fig|224308.179.peg.2893"/>
<dbReference type="eggNOG" id="COG0697">
    <property type="taxonomic scope" value="Bacteria"/>
</dbReference>
<dbReference type="InParanoid" id="O07086"/>
<dbReference type="OrthoDB" id="4167046at2"/>
<dbReference type="PhylomeDB" id="O07086"/>
<dbReference type="BioCyc" id="BSUB:BSU26620-MONOMER"/>
<dbReference type="Proteomes" id="UP000001570">
    <property type="component" value="Chromosome"/>
</dbReference>
<dbReference type="GO" id="GO:0005886">
    <property type="term" value="C:plasma membrane"/>
    <property type="evidence" value="ECO:0007669"/>
    <property type="project" value="UniProtKB-SubCell"/>
</dbReference>
<dbReference type="InterPro" id="IPR050638">
    <property type="entry name" value="AA-Vitamin_Transporters"/>
</dbReference>
<dbReference type="InterPro" id="IPR000620">
    <property type="entry name" value="EamA_dom"/>
</dbReference>
<dbReference type="PANTHER" id="PTHR32322">
    <property type="entry name" value="INNER MEMBRANE TRANSPORTER"/>
    <property type="match status" value="1"/>
</dbReference>
<dbReference type="PANTHER" id="PTHR32322:SF18">
    <property type="entry name" value="S-ADENOSYLMETHIONINE_S-ADENOSYLHOMOCYSTEINE TRANSPORTER"/>
    <property type="match status" value="1"/>
</dbReference>
<dbReference type="Pfam" id="PF00892">
    <property type="entry name" value="EamA"/>
    <property type="match status" value="2"/>
</dbReference>
<protein>
    <recommendedName>
        <fullName>Uncharacterized transporter YrdR</fullName>
    </recommendedName>
</protein>
<gene>
    <name type="primary">yrdR</name>
    <name type="ordered locus">BSU26620</name>
</gene>
<name>YRDR_BACSU</name>
<evidence type="ECO:0000255" key="1"/>
<evidence type="ECO:0000305" key="2"/>
<keyword id="KW-1003">Cell membrane</keyword>
<keyword id="KW-0472">Membrane</keyword>
<keyword id="KW-1185">Reference proteome</keyword>
<keyword id="KW-0677">Repeat</keyword>
<keyword id="KW-0812">Transmembrane</keyword>
<keyword id="KW-1133">Transmembrane helix</keyword>
<keyword id="KW-0813">Transport</keyword>
<comment type="subcellular location">
    <subcellularLocation>
        <location evidence="2">Cell membrane</location>
        <topology evidence="2">Multi-pass membrane protein</topology>
    </subcellularLocation>
</comment>
<comment type="similarity">
    <text evidence="2">Belongs to the EamA transporter family.</text>
</comment>
<sequence length="321" mass="35912">MKKGQLFIGALTCLVASMSWGAMFPVADHALEFVDPFYFSFIRYGVVTIMLVILLLVREGKKSFHLEGKAKWIILFGVMAFTIYNVLIFLGQRLMGKSGIMTASIAEALMPMLSIVILWGYKHVKPKKYTMISILIAFLGASMVITKGNISFFFSLGDHLFSILFIFIGVLGWVVYTMGGQIFREWSTLRYSTLTCLFGTAITGIMTAILTAQGYVSVPSIKVIAAIKYDFLFMITLPGIIALLSWNYGIKILSSINGILFINFVPITTLLIMVIKGYNITAFDIVGTLFVIIGLILNNIYQRKEDYKQVLQKEKTNLTIT</sequence>
<reference key="1">
    <citation type="journal article" date="1997" name="Microbiology">
        <title>Sequence of the Bacillus subtilis genome region in the vicinity of the lev operon reveals two new extracytoplasmic function RNA polymerase sigma factors SigV and SigZ.</title>
        <authorList>
            <person name="Sorokin A."/>
            <person name="Bolotin A."/>
            <person name="Purnelle B."/>
            <person name="Hilbert H."/>
            <person name="Lauber J."/>
            <person name="Duesterhoeft A."/>
            <person name="Ehrlich S.D."/>
        </authorList>
    </citation>
    <scope>NUCLEOTIDE SEQUENCE [GENOMIC DNA]</scope>
    <source>
        <strain>168</strain>
    </source>
</reference>
<reference key="2">
    <citation type="journal article" date="1997" name="Nature">
        <title>The complete genome sequence of the Gram-positive bacterium Bacillus subtilis.</title>
        <authorList>
            <person name="Kunst F."/>
            <person name="Ogasawara N."/>
            <person name="Moszer I."/>
            <person name="Albertini A.M."/>
            <person name="Alloni G."/>
            <person name="Azevedo V."/>
            <person name="Bertero M.G."/>
            <person name="Bessieres P."/>
            <person name="Bolotin A."/>
            <person name="Borchert S."/>
            <person name="Borriss R."/>
            <person name="Boursier L."/>
            <person name="Brans A."/>
            <person name="Braun M."/>
            <person name="Brignell S.C."/>
            <person name="Bron S."/>
            <person name="Brouillet S."/>
            <person name="Bruschi C.V."/>
            <person name="Caldwell B."/>
            <person name="Capuano V."/>
            <person name="Carter N.M."/>
            <person name="Choi S.-K."/>
            <person name="Codani J.-J."/>
            <person name="Connerton I.F."/>
            <person name="Cummings N.J."/>
            <person name="Daniel R.A."/>
            <person name="Denizot F."/>
            <person name="Devine K.M."/>
            <person name="Duesterhoeft A."/>
            <person name="Ehrlich S.D."/>
            <person name="Emmerson P.T."/>
            <person name="Entian K.-D."/>
            <person name="Errington J."/>
            <person name="Fabret C."/>
            <person name="Ferrari E."/>
            <person name="Foulger D."/>
            <person name="Fritz C."/>
            <person name="Fujita M."/>
            <person name="Fujita Y."/>
            <person name="Fuma S."/>
            <person name="Galizzi A."/>
            <person name="Galleron N."/>
            <person name="Ghim S.-Y."/>
            <person name="Glaser P."/>
            <person name="Goffeau A."/>
            <person name="Golightly E.J."/>
            <person name="Grandi G."/>
            <person name="Guiseppi G."/>
            <person name="Guy B.J."/>
            <person name="Haga K."/>
            <person name="Haiech J."/>
            <person name="Harwood C.R."/>
            <person name="Henaut A."/>
            <person name="Hilbert H."/>
            <person name="Holsappel S."/>
            <person name="Hosono S."/>
            <person name="Hullo M.-F."/>
            <person name="Itaya M."/>
            <person name="Jones L.-M."/>
            <person name="Joris B."/>
            <person name="Karamata D."/>
            <person name="Kasahara Y."/>
            <person name="Klaerr-Blanchard M."/>
            <person name="Klein C."/>
            <person name="Kobayashi Y."/>
            <person name="Koetter P."/>
            <person name="Koningstein G."/>
            <person name="Krogh S."/>
            <person name="Kumano M."/>
            <person name="Kurita K."/>
            <person name="Lapidus A."/>
            <person name="Lardinois S."/>
            <person name="Lauber J."/>
            <person name="Lazarevic V."/>
            <person name="Lee S.-M."/>
            <person name="Levine A."/>
            <person name="Liu H."/>
            <person name="Masuda S."/>
            <person name="Mauel C."/>
            <person name="Medigue C."/>
            <person name="Medina N."/>
            <person name="Mellado R.P."/>
            <person name="Mizuno M."/>
            <person name="Moestl D."/>
            <person name="Nakai S."/>
            <person name="Noback M."/>
            <person name="Noone D."/>
            <person name="O'Reilly M."/>
            <person name="Ogawa K."/>
            <person name="Ogiwara A."/>
            <person name="Oudega B."/>
            <person name="Park S.-H."/>
            <person name="Parro V."/>
            <person name="Pohl T.M."/>
            <person name="Portetelle D."/>
            <person name="Porwollik S."/>
            <person name="Prescott A.M."/>
            <person name="Presecan E."/>
            <person name="Pujic P."/>
            <person name="Purnelle B."/>
            <person name="Rapoport G."/>
            <person name="Rey M."/>
            <person name="Reynolds S."/>
            <person name="Rieger M."/>
            <person name="Rivolta C."/>
            <person name="Rocha E."/>
            <person name="Roche B."/>
            <person name="Rose M."/>
            <person name="Sadaie Y."/>
            <person name="Sato T."/>
            <person name="Scanlan E."/>
            <person name="Schleich S."/>
            <person name="Schroeter R."/>
            <person name="Scoffone F."/>
            <person name="Sekiguchi J."/>
            <person name="Sekowska A."/>
            <person name="Seror S.J."/>
            <person name="Serror P."/>
            <person name="Shin B.-S."/>
            <person name="Soldo B."/>
            <person name="Sorokin A."/>
            <person name="Tacconi E."/>
            <person name="Takagi T."/>
            <person name="Takahashi H."/>
            <person name="Takemaru K."/>
            <person name="Takeuchi M."/>
            <person name="Tamakoshi A."/>
            <person name="Tanaka T."/>
            <person name="Terpstra P."/>
            <person name="Tognoni A."/>
            <person name="Tosato V."/>
            <person name="Uchiyama S."/>
            <person name="Vandenbol M."/>
            <person name="Vannier F."/>
            <person name="Vassarotti A."/>
            <person name="Viari A."/>
            <person name="Wambutt R."/>
            <person name="Wedler E."/>
            <person name="Wedler H."/>
            <person name="Weitzenegger T."/>
            <person name="Winters P."/>
            <person name="Wipat A."/>
            <person name="Yamamoto H."/>
            <person name="Yamane K."/>
            <person name="Yasumoto K."/>
            <person name="Yata K."/>
            <person name="Yoshida K."/>
            <person name="Yoshikawa H.-F."/>
            <person name="Zumstein E."/>
            <person name="Yoshikawa H."/>
            <person name="Danchin A."/>
        </authorList>
    </citation>
    <scope>NUCLEOTIDE SEQUENCE [LARGE SCALE GENOMIC DNA]</scope>
    <source>
        <strain>168</strain>
    </source>
</reference>
<organism>
    <name type="scientific">Bacillus subtilis (strain 168)</name>
    <dbReference type="NCBI Taxonomy" id="224308"/>
    <lineage>
        <taxon>Bacteria</taxon>
        <taxon>Bacillati</taxon>
        <taxon>Bacillota</taxon>
        <taxon>Bacilli</taxon>
        <taxon>Bacillales</taxon>
        <taxon>Bacillaceae</taxon>
        <taxon>Bacillus</taxon>
    </lineage>
</organism>
<accession>O07086</accession>
<feature type="chain" id="PRO_0000108184" description="Uncharacterized transporter YrdR">
    <location>
        <begin position="1"/>
        <end position="321"/>
    </location>
</feature>
<feature type="transmembrane region" description="Helical" evidence="1">
    <location>
        <begin position="6"/>
        <end position="26"/>
    </location>
</feature>
<feature type="transmembrane region" description="Helical" evidence="1">
    <location>
        <begin position="37"/>
        <end position="57"/>
    </location>
</feature>
<feature type="transmembrane region" description="Helical" evidence="1">
    <location>
        <begin position="72"/>
        <end position="92"/>
    </location>
</feature>
<feature type="transmembrane region" description="Helical" evidence="1">
    <location>
        <begin position="100"/>
        <end position="120"/>
    </location>
</feature>
<feature type="transmembrane region" description="Helical" evidence="1">
    <location>
        <begin position="134"/>
        <end position="154"/>
    </location>
</feature>
<feature type="transmembrane region" description="Helical" evidence="1">
    <location>
        <begin position="160"/>
        <end position="180"/>
    </location>
</feature>
<feature type="transmembrane region" description="Helical" evidence="1">
    <location>
        <begin position="196"/>
        <end position="216"/>
    </location>
</feature>
<feature type="transmembrane region" description="Helical" evidence="1">
    <location>
        <begin position="223"/>
        <end position="243"/>
    </location>
</feature>
<feature type="transmembrane region" description="Helical" evidence="1">
    <location>
        <begin position="255"/>
        <end position="275"/>
    </location>
</feature>
<feature type="transmembrane region" description="Helical" evidence="1">
    <location>
        <begin position="277"/>
        <end position="297"/>
    </location>
</feature>
<feature type="domain" description="EamA 1">
    <location>
        <begin position="18"/>
        <end position="146"/>
    </location>
</feature>
<feature type="domain" description="EamA 2">
    <location>
        <begin position="175"/>
        <end position="300"/>
    </location>
</feature>